<accession>Q54BN8</accession>
<accession>Q9GPT0</accession>
<dbReference type="EMBL" id="AAFI02000218">
    <property type="protein sequence ID" value="EAL60579.1"/>
    <property type="molecule type" value="Genomic_DNA"/>
</dbReference>
<dbReference type="EMBL" id="AF310888">
    <property type="protein sequence ID" value="AAG45119.1"/>
    <property type="molecule type" value="Genomic_DNA"/>
</dbReference>
<dbReference type="RefSeq" id="XP_628991.1">
    <property type="nucleotide sequence ID" value="XM_628989.1"/>
</dbReference>
<dbReference type="FunCoup" id="Q54BN8">
    <property type="interactions" value="648"/>
</dbReference>
<dbReference type="STRING" id="44689.Q54BN8"/>
<dbReference type="PaxDb" id="44689-DDB0220125"/>
<dbReference type="EnsemblProtists" id="EAL60579">
    <property type="protein sequence ID" value="EAL60579"/>
    <property type="gene ID" value="DDB_G0293534"/>
</dbReference>
<dbReference type="GeneID" id="8629274"/>
<dbReference type="KEGG" id="ddi:DDB_G0293534"/>
<dbReference type="dictyBase" id="DDB_G0293534"/>
<dbReference type="VEuPathDB" id="AmoebaDB:DDB_G0293534"/>
<dbReference type="eggNOG" id="ENOG502RFUD">
    <property type="taxonomic scope" value="Eukaryota"/>
</dbReference>
<dbReference type="HOGENOM" id="CLU_300049_0_0_1"/>
<dbReference type="InParanoid" id="Q54BN8"/>
<dbReference type="OMA" id="VVNMFQY"/>
<dbReference type="PRO" id="PR:Q54BN8"/>
<dbReference type="Proteomes" id="UP000002195">
    <property type="component" value="Chromosome 6"/>
</dbReference>
<dbReference type="GO" id="GO:0016020">
    <property type="term" value="C:membrane"/>
    <property type="evidence" value="ECO:0007669"/>
    <property type="project" value="UniProtKB-SubCell"/>
</dbReference>
<dbReference type="GO" id="GO:0005643">
    <property type="term" value="C:nuclear pore"/>
    <property type="evidence" value="ECO:0000318"/>
    <property type="project" value="GO_Central"/>
</dbReference>
<dbReference type="GO" id="GO:0050290">
    <property type="term" value="F:sphingomyelin phosphodiesterase D activity"/>
    <property type="evidence" value="ECO:0007669"/>
    <property type="project" value="InterPro"/>
</dbReference>
<dbReference type="GO" id="GO:0017056">
    <property type="term" value="F:structural constituent of nuclear pore"/>
    <property type="evidence" value="ECO:0000318"/>
    <property type="project" value="GO_Central"/>
</dbReference>
<dbReference type="GO" id="GO:0006406">
    <property type="term" value="P:mRNA export from nucleus"/>
    <property type="evidence" value="ECO:0000318"/>
    <property type="project" value="GO_Central"/>
</dbReference>
<dbReference type="InterPro" id="IPR024129">
    <property type="entry name" value="Sphingomy_SMPD4"/>
</dbReference>
<dbReference type="PANTHER" id="PTHR12988">
    <property type="entry name" value="SPHINGOMYELIN PHOSPHODIESTERASE 4"/>
    <property type="match status" value="1"/>
</dbReference>
<dbReference type="PANTHER" id="PTHR12988:SF6">
    <property type="entry name" value="SPHINGOMYELIN PHOSPHODIESTERASE 4"/>
    <property type="match status" value="1"/>
</dbReference>
<protein>
    <recommendedName>
        <fullName>Uncharacterized protein DDB_G0293534</fullName>
    </recommendedName>
</protein>
<comment type="subcellular location">
    <subcellularLocation>
        <location evidence="3">Membrane</location>
        <topology evidence="3">Single-pass membrane protein</topology>
    </subcellularLocation>
</comment>
<name>Y3534_DICDI</name>
<gene>
    <name type="ORF">DDB_G0293534</name>
</gene>
<feature type="chain" id="PRO_0000377439" description="Uncharacterized protein DDB_G0293534">
    <location>
        <begin position="1"/>
        <end position="999"/>
    </location>
</feature>
<feature type="transmembrane region" description="Helical" evidence="1">
    <location>
        <begin position="976"/>
        <end position="996"/>
    </location>
</feature>
<feature type="region of interest" description="Disordered" evidence="2">
    <location>
        <begin position="45"/>
        <end position="129"/>
    </location>
</feature>
<feature type="region of interest" description="Disordered" evidence="2">
    <location>
        <begin position="873"/>
        <end position="904"/>
    </location>
</feature>
<feature type="coiled-coil region" evidence="1">
    <location>
        <begin position="723"/>
        <end position="767"/>
    </location>
</feature>
<feature type="compositionally biased region" description="Low complexity" evidence="2">
    <location>
        <begin position="45"/>
        <end position="128"/>
    </location>
</feature>
<feature type="compositionally biased region" description="Low complexity" evidence="2">
    <location>
        <begin position="873"/>
        <end position="887"/>
    </location>
</feature>
<feature type="sequence conflict" description="In Ref. 2; AAG45119." evidence="3" ref="2">
    <original>G</original>
    <variation>D</variation>
    <location>
        <position position="54"/>
    </location>
</feature>
<feature type="sequence conflict" description="In Ref. 2; AAG45119." evidence="3" ref="2">
    <original>S</original>
    <variation>Y</variation>
    <location>
        <position position="101"/>
    </location>
</feature>
<feature type="sequence conflict" description="In Ref. 2; AAG45119." evidence="3" ref="2">
    <location>
        <begin position="273"/>
        <end position="276"/>
    </location>
</feature>
<feature type="sequence conflict" description="In Ref. 2; AAG45119." evidence="3" ref="2">
    <original>NSI</original>
    <variation>KST</variation>
    <location>
        <begin position="294"/>
        <end position="296"/>
    </location>
</feature>
<sequence>MYIQQSQIDVNSTMIKPLKNSNGISNSNINSFSIKNDIDSNINSNSNNIGNGNGNGNNSCNDHKNNNNNNNNRISPTLSSSSSSSSSHTTSPIIPSSKLNSNTTTSTTPTSTTSSTPTTPTITPSSPSVLYKNPMEFDNVFQFKEVLQRVLDSQFQSDWVAIIAKILGYILPNNDIVLRKCQNDEDVKELLSLLRPSSQLFRMIIENFTNDSFQFYFPFDRIPKCVIFDITIKNQSTPKIINQININQYKKDIVVNMFQYFFFAFGLFPDHLNLEMQLLPANLNNNNNNNNNNNSINNTLNSIENKFTRTIHGIPTFSANRQNSGNRLSSSTGFNSQRIFSGSSSSSSSGSSQTDNSLLFNYQQQQYMMSQKTKSIYLRLLSEYMDFFLPFQRSLIDGNLIIDPNRKLMVNHDMSLTFLKIITESLLGHNLLNQSLNILNQFNYSLLSSFKKPTPVYLSTIQTFITYFQCYSYTFNYLSPFSINSPPSSPSPSPITSNGNKSTTATATIIQPILMTPSLGLFFKQREIVSSGLFEYFVSYFERLDPNDQYLPIDKILNIWVGWLTPWDPNTRTSRRISPNVLQKNNKSTSSFQNLLNLTSSFTHSIGVVGNSGGNKNSNIGSASNLLVLNQEYYSKWENYVIEHYYFYSFIFNLLLIRSQSLDITSYLYIFKSILNIFNSPVLKSLLKRISKHDSIIVQQQEQQYQYQYQQQQQYHYQQPQFYQQSQQQQSQQQQQQQQQQQQQQQQQQQQQQQQQQQQQQQQQQQQPQQPSQQQTPSVSSNYIDVSKDILLRLEYQIGFYQIREFINERNLFSELMVSNASRLVDILTLKINQQNQKDYLEVIKSLCTFYDFEEPIIKEKINNTTIINNNPNDINNANNSNNNNNNQSQVLLSPNRNKDGTLNDMGRKQIYDGKVICKPFDSNYPYEKLISQPLVFEKQPITSEEIGIIIKFGYMLTDNSQTRLFIRKLARKKLLFSLVLILAFIWFFFEIYFFFTRK</sequence>
<proteinExistence type="predicted"/>
<keyword id="KW-0175">Coiled coil</keyword>
<keyword id="KW-0472">Membrane</keyword>
<keyword id="KW-1185">Reference proteome</keyword>
<keyword id="KW-0812">Transmembrane</keyword>
<keyword id="KW-1133">Transmembrane helix</keyword>
<evidence type="ECO:0000255" key="1"/>
<evidence type="ECO:0000256" key="2">
    <source>
        <dbReference type="SAM" id="MobiDB-lite"/>
    </source>
</evidence>
<evidence type="ECO:0000305" key="3"/>
<reference key="1">
    <citation type="journal article" date="2005" name="Nature">
        <title>The genome of the social amoeba Dictyostelium discoideum.</title>
        <authorList>
            <person name="Eichinger L."/>
            <person name="Pachebat J.A."/>
            <person name="Gloeckner G."/>
            <person name="Rajandream M.A."/>
            <person name="Sucgang R."/>
            <person name="Berriman M."/>
            <person name="Song J."/>
            <person name="Olsen R."/>
            <person name="Szafranski K."/>
            <person name="Xu Q."/>
            <person name="Tunggal B."/>
            <person name="Kummerfeld S."/>
            <person name="Madera M."/>
            <person name="Konfortov B.A."/>
            <person name="Rivero F."/>
            <person name="Bankier A.T."/>
            <person name="Lehmann R."/>
            <person name="Hamlin N."/>
            <person name="Davies R."/>
            <person name="Gaudet P."/>
            <person name="Fey P."/>
            <person name="Pilcher K."/>
            <person name="Chen G."/>
            <person name="Saunders D."/>
            <person name="Sodergren E.J."/>
            <person name="Davis P."/>
            <person name="Kerhornou A."/>
            <person name="Nie X."/>
            <person name="Hall N."/>
            <person name="Anjard C."/>
            <person name="Hemphill L."/>
            <person name="Bason N."/>
            <person name="Farbrother P."/>
            <person name="Desany B."/>
            <person name="Just E."/>
            <person name="Morio T."/>
            <person name="Rost R."/>
            <person name="Churcher C.M."/>
            <person name="Cooper J."/>
            <person name="Haydock S."/>
            <person name="van Driessche N."/>
            <person name="Cronin A."/>
            <person name="Goodhead I."/>
            <person name="Muzny D.M."/>
            <person name="Mourier T."/>
            <person name="Pain A."/>
            <person name="Lu M."/>
            <person name="Harper D."/>
            <person name="Lindsay R."/>
            <person name="Hauser H."/>
            <person name="James K.D."/>
            <person name="Quiles M."/>
            <person name="Madan Babu M."/>
            <person name="Saito T."/>
            <person name="Buchrieser C."/>
            <person name="Wardroper A."/>
            <person name="Felder M."/>
            <person name="Thangavelu M."/>
            <person name="Johnson D."/>
            <person name="Knights A."/>
            <person name="Loulseged H."/>
            <person name="Mungall K.L."/>
            <person name="Oliver K."/>
            <person name="Price C."/>
            <person name="Quail M.A."/>
            <person name="Urushihara H."/>
            <person name="Hernandez J."/>
            <person name="Rabbinowitsch E."/>
            <person name="Steffen D."/>
            <person name="Sanders M."/>
            <person name="Ma J."/>
            <person name="Kohara Y."/>
            <person name="Sharp S."/>
            <person name="Simmonds M.N."/>
            <person name="Spiegler S."/>
            <person name="Tivey A."/>
            <person name="Sugano S."/>
            <person name="White B."/>
            <person name="Walker D."/>
            <person name="Woodward J.R."/>
            <person name="Winckler T."/>
            <person name="Tanaka Y."/>
            <person name="Shaulsky G."/>
            <person name="Schleicher M."/>
            <person name="Weinstock G.M."/>
            <person name="Rosenthal A."/>
            <person name="Cox E.C."/>
            <person name="Chisholm R.L."/>
            <person name="Gibbs R.A."/>
            <person name="Loomis W.F."/>
            <person name="Platzer M."/>
            <person name="Kay R.R."/>
            <person name="Williams J.G."/>
            <person name="Dear P.H."/>
            <person name="Noegel A.A."/>
            <person name="Barrell B.G."/>
            <person name="Kuspa A."/>
        </authorList>
    </citation>
    <scope>NUCLEOTIDE SEQUENCE [LARGE SCALE GENOMIC DNA]</scope>
    <source>
        <strain>AX4</strain>
    </source>
</reference>
<reference key="2">
    <citation type="journal article" date="2001" name="Nucleic Acids Res.">
        <title>The Dictyostelium discoideum family of Rho-related proteins.</title>
        <authorList>
            <person name="Rivero F."/>
            <person name="Dislich H."/>
            <person name="Gloeckner G."/>
            <person name="Noegel A.A."/>
        </authorList>
    </citation>
    <scope>NUCLEOTIDE SEQUENCE [GENOMIC DNA] OF 1-297</scope>
    <source>
        <strain>AX4</strain>
    </source>
</reference>
<organism>
    <name type="scientific">Dictyostelium discoideum</name>
    <name type="common">Social amoeba</name>
    <dbReference type="NCBI Taxonomy" id="44689"/>
    <lineage>
        <taxon>Eukaryota</taxon>
        <taxon>Amoebozoa</taxon>
        <taxon>Evosea</taxon>
        <taxon>Eumycetozoa</taxon>
        <taxon>Dictyostelia</taxon>
        <taxon>Dictyosteliales</taxon>
        <taxon>Dictyosteliaceae</taxon>
        <taxon>Dictyostelium</taxon>
    </lineage>
</organism>